<reference key="1">
    <citation type="journal article" date="1995" name="Microbiology">
        <title>Multidrug resistance in Klebsiella pneumoniae: a novel gene, ramA, confers a multidrug resistance phenotype in Escherichia coli.</title>
        <authorList>
            <person name="George A.M."/>
            <person name="Hall R.M."/>
            <person name="Stokes H.W."/>
        </authorList>
    </citation>
    <scope>NUCLEOTIDE SEQUENCE [GENOMIC DNA]</scope>
    <source>
        <strain>ECL8</strain>
    </source>
</reference>
<organism>
    <name type="scientific">Klebsiella pneumoniae</name>
    <dbReference type="NCBI Taxonomy" id="573"/>
    <lineage>
        <taxon>Bacteria</taxon>
        <taxon>Pseudomonadati</taxon>
        <taxon>Pseudomonadota</taxon>
        <taxon>Gammaproteobacteria</taxon>
        <taxon>Enterobacterales</taxon>
        <taxon>Enterobacteriaceae</taxon>
        <taxon>Klebsiella/Raoultella group</taxon>
        <taxon>Klebsiella</taxon>
        <taxon>Klebsiella pneumoniae complex</taxon>
    </lineage>
</organism>
<keyword id="KW-1003">Cell membrane</keyword>
<keyword id="KW-0472">Membrane</keyword>
<keyword id="KW-0812">Transmembrane</keyword>
<keyword id="KW-1133">Transmembrane helix</keyword>
<evidence type="ECO:0000255" key="1"/>
<evidence type="ECO:0000305" key="2"/>
<accession>Q48414</accession>
<sequence>MKHPLETLLSAAGILLLALLSCLLLPAPSLGLTLAQKLVETFHMMDLNQLYTVLFCLWFLALGAIEYLVLRWVWRRWFSLER</sequence>
<dbReference type="EMBL" id="U19581">
    <property type="protein sequence ID" value="AAA85698.1"/>
    <property type="molecule type" value="Genomic_DNA"/>
</dbReference>
<dbReference type="PIR" id="T09628">
    <property type="entry name" value="T09628"/>
</dbReference>
<dbReference type="RefSeq" id="WP_002893037.1">
    <property type="nucleotide sequence ID" value="NZ_WYAM01000012.1"/>
</dbReference>
<dbReference type="GeneID" id="93252804"/>
<dbReference type="OMA" id="FVWRRWF"/>
<dbReference type="GO" id="GO:0005886">
    <property type="term" value="C:plasma membrane"/>
    <property type="evidence" value="ECO:0007669"/>
    <property type="project" value="UniProtKB-SubCell"/>
</dbReference>
<dbReference type="InterPro" id="IPR010590">
    <property type="entry name" value="DUF1158"/>
</dbReference>
<dbReference type="Pfam" id="PF06643">
    <property type="entry name" value="DUF1158"/>
    <property type="match status" value="1"/>
</dbReference>
<dbReference type="PROSITE" id="PS51257">
    <property type="entry name" value="PROKAR_LIPOPROTEIN"/>
    <property type="match status" value="1"/>
</dbReference>
<feature type="chain" id="PRO_0000168670" description="Uncharacterized protein in ramA 3'region">
    <location>
        <begin position="1"/>
        <end position="82"/>
    </location>
</feature>
<feature type="transmembrane region" description="Helical" evidence="1">
    <location>
        <begin position="8"/>
        <end position="28"/>
    </location>
</feature>
<feature type="transmembrane region" description="Helical" evidence="1">
    <location>
        <begin position="50"/>
        <end position="70"/>
    </location>
</feature>
<proteinExistence type="predicted"/>
<name>YBDJ_KLEPN</name>
<protein>
    <recommendedName>
        <fullName>Uncharacterized protein in ramA 3'region</fullName>
    </recommendedName>
</protein>
<comment type="subcellular location">
    <subcellularLocation>
        <location evidence="2">Cell membrane</location>
        <topology evidence="2">Multi-pass membrane protein</topology>
    </subcellularLocation>
</comment>